<sequence>MSNLEKSLRHEVILDIIESKCICKQEELIIELKECGINVTQATLSRDLHEMNIIRKSFENHEHRYIVTKEDKFIKKFKNIFKSSVRSISMQEYFISVNTLDGMASLIGEFIDRLGDGRIAGTVAKKNHILVLCRSVNATQQIFKELDSLRV</sequence>
<protein>
    <recommendedName>
        <fullName>Arginine regulator</fullName>
    </recommendedName>
</protein>
<organism>
    <name type="scientific">Clostridium perfringens (strain 13 / Type A)</name>
    <dbReference type="NCBI Taxonomy" id="195102"/>
    <lineage>
        <taxon>Bacteria</taxon>
        <taxon>Bacillati</taxon>
        <taxon>Bacillota</taxon>
        <taxon>Clostridia</taxon>
        <taxon>Eubacteriales</taxon>
        <taxon>Clostridiaceae</taxon>
        <taxon>Clostridium</taxon>
    </lineage>
</organism>
<accession>Q46172</accession>
<reference key="1">
    <citation type="journal article" date="1997" name="FEMS Microbiol. Lett.">
        <title>Collagenase gene (colA) is located in the 3'-flanking region of the perfringolysin O (pfoA) locus in Clostridium perfringens.</title>
        <authorList>
            <person name="Ohtani K."/>
            <person name="Bando M."/>
            <person name="Swe T."/>
            <person name="Banu S."/>
            <person name="Oe M."/>
            <person name="Hayashi H."/>
            <person name="Shimizu T."/>
        </authorList>
    </citation>
    <scope>NUCLEOTIDE SEQUENCE [GENOMIC DNA]</scope>
    <source>
        <strain>13 / Type A</strain>
    </source>
</reference>
<reference key="2">
    <citation type="journal article" date="2002" name="Proc. Natl. Acad. Sci. U.S.A.">
        <title>Complete genome sequence of Clostridium perfringens, an anaerobic flesh-eater.</title>
        <authorList>
            <person name="Shimizu T."/>
            <person name="Ohtani K."/>
            <person name="Hirakawa H."/>
            <person name="Ohshima K."/>
            <person name="Yamashita A."/>
            <person name="Shiba T."/>
            <person name="Ogasawara N."/>
            <person name="Hattori M."/>
            <person name="Kuhara S."/>
            <person name="Hayashi H."/>
        </authorList>
    </citation>
    <scope>NUCLEOTIDE SEQUENCE [LARGE SCALE GENOMIC DNA]</scope>
    <source>
        <strain>13 / Type A</strain>
    </source>
</reference>
<gene>
    <name type="primary">argR1</name>
    <name type="synonym">ahrC</name>
    <name type="synonym">argR</name>
    <name type="ordered locus">CPE0172</name>
</gene>
<keyword id="KW-0056">Arginine metabolism</keyword>
<keyword id="KW-0963">Cytoplasm</keyword>
<keyword id="KW-0238">DNA-binding</keyword>
<keyword id="KW-1185">Reference proteome</keyword>
<keyword id="KW-0804">Transcription</keyword>
<keyword id="KW-0805">Transcription regulation</keyword>
<feature type="chain" id="PRO_0000205079" description="Arginine regulator">
    <location>
        <begin position="1"/>
        <end position="151"/>
    </location>
</feature>
<feature type="sequence conflict" description="In Ref. 1; CAA66368." evidence="2" ref="1">
    <original>K</original>
    <variation>T</variation>
    <location>
        <position position="126"/>
    </location>
</feature>
<feature type="sequence conflict" description="In Ref. 1; CAA66368." evidence="2" ref="1">
    <original>KELDSLRV</original>
    <variation>RN</variation>
    <location>
        <begin position="144"/>
        <end position="151"/>
    </location>
</feature>
<proteinExistence type="inferred from homology"/>
<dbReference type="EMBL" id="X97768">
    <property type="protein sequence ID" value="CAA66368.1"/>
    <property type="molecule type" value="Genomic_DNA"/>
</dbReference>
<dbReference type="EMBL" id="BA000016">
    <property type="protein sequence ID" value="BAB79878.1"/>
    <property type="molecule type" value="Genomic_DNA"/>
</dbReference>
<dbReference type="RefSeq" id="WP_003457490.1">
    <property type="nucleotide sequence ID" value="NC_003366.1"/>
</dbReference>
<dbReference type="SMR" id="Q46172"/>
<dbReference type="STRING" id="195102.gene:10489416"/>
<dbReference type="KEGG" id="cpe:CPE0172"/>
<dbReference type="HOGENOM" id="CLU_097103_3_0_9"/>
<dbReference type="UniPathway" id="UPA00254"/>
<dbReference type="Proteomes" id="UP000000818">
    <property type="component" value="Chromosome"/>
</dbReference>
<dbReference type="GO" id="GO:0005737">
    <property type="term" value="C:cytoplasm"/>
    <property type="evidence" value="ECO:0007669"/>
    <property type="project" value="UniProtKB-SubCell"/>
</dbReference>
<dbReference type="GO" id="GO:0034618">
    <property type="term" value="F:arginine binding"/>
    <property type="evidence" value="ECO:0007669"/>
    <property type="project" value="InterPro"/>
</dbReference>
<dbReference type="GO" id="GO:0003677">
    <property type="term" value="F:DNA binding"/>
    <property type="evidence" value="ECO:0007669"/>
    <property type="project" value="UniProtKB-KW"/>
</dbReference>
<dbReference type="GO" id="GO:0003700">
    <property type="term" value="F:DNA-binding transcription factor activity"/>
    <property type="evidence" value="ECO:0007669"/>
    <property type="project" value="UniProtKB-UniRule"/>
</dbReference>
<dbReference type="GO" id="GO:0019547">
    <property type="term" value="P:arginine catabolic process to ornithine"/>
    <property type="evidence" value="ECO:0007669"/>
    <property type="project" value="UniProtKB-UniPathway"/>
</dbReference>
<dbReference type="GO" id="GO:0051259">
    <property type="term" value="P:protein complex oligomerization"/>
    <property type="evidence" value="ECO:0007669"/>
    <property type="project" value="InterPro"/>
</dbReference>
<dbReference type="GO" id="GO:1900079">
    <property type="term" value="P:regulation of arginine biosynthetic process"/>
    <property type="evidence" value="ECO:0007669"/>
    <property type="project" value="UniProtKB-UniRule"/>
</dbReference>
<dbReference type="Gene3D" id="3.30.1360.40">
    <property type="match status" value="1"/>
</dbReference>
<dbReference type="Gene3D" id="1.10.10.10">
    <property type="entry name" value="Winged helix-like DNA-binding domain superfamily/Winged helix DNA-binding domain"/>
    <property type="match status" value="1"/>
</dbReference>
<dbReference type="HAMAP" id="MF_00173">
    <property type="entry name" value="Arg_repressor"/>
    <property type="match status" value="1"/>
</dbReference>
<dbReference type="InterPro" id="IPR001669">
    <property type="entry name" value="Arg_repress"/>
</dbReference>
<dbReference type="InterPro" id="IPR020899">
    <property type="entry name" value="Arg_repress_C"/>
</dbReference>
<dbReference type="InterPro" id="IPR036251">
    <property type="entry name" value="Arg_repress_C_sf"/>
</dbReference>
<dbReference type="InterPro" id="IPR020900">
    <property type="entry name" value="Arg_repress_DNA-bd"/>
</dbReference>
<dbReference type="InterPro" id="IPR036388">
    <property type="entry name" value="WH-like_DNA-bd_sf"/>
</dbReference>
<dbReference type="InterPro" id="IPR036390">
    <property type="entry name" value="WH_DNA-bd_sf"/>
</dbReference>
<dbReference type="PANTHER" id="PTHR34471">
    <property type="entry name" value="ARGININE REPRESSOR"/>
    <property type="match status" value="1"/>
</dbReference>
<dbReference type="PANTHER" id="PTHR34471:SF1">
    <property type="entry name" value="ARGININE REPRESSOR"/>
    <property type="match status" value="1"/>
</dbReference>
<dbReference type="Pfam" id="PF01316">
    <property type="entry name" value="Arg_repressor"/>
    <property type="match status" value="1"/>
</dbReference>
<dbReference type="Pfam" id="PF02863">
    <property type="entry name" value="Arg_repressor_C"/>
    <property type="match status" value="1"/>
</dbReference>
<dbReference type="PRINTS" id="PR01467">
    <property type="entry name" value="ARGREPRESSOR"/>
</dbReference>
<dbReference type="SUPFAM" id="SSF55252">
    <property type="entry name" value="C-terminal domain of arginine repressor"/>
    <property type="match status" value="1"/>
</dbReference>
<dbReference type="SUPFAM" id="SSF46785">
    <property type="entry name" value="Winged helix' DNA-binding domain"/>
    <property type="match status" value="1"/>
</dbReference>
<comment type="function">
    <text evidence="1">Regulates the transcription of the arc operon, involved in arginine catabolism.</text>
</comment>
<comment type="pathway">
    <text>Amino-acid degradation; L-arginine degradation via ADI pathway.</text>
</comment>
<comment type="subcellular location">
    <subcellularLocation>
        <location evidence="1">Cytoplasm</location>
    </subcellularLocation>
</comment>
<comment type="similarity">
    <text evidence="2">Belongs to the ArgR family.</text>
</comment>
<name>ARGR1_CLOPE</name>
<evidence type="ECO:0000250" key="1"/>
<evidence type="ECO:0000305" key="2"/>